<keyword id="KW-0119">Carbohydrate metabolism</keyword>
<keyword id="KW-0961">Cell wall biogenesis/degradation</keyword>
<keyword id="KW-0136">Cellulose degradation</keyword>
<keyword id="KW-0325">Glycoprotein</keyword>
<keyword id="KW-0326">Glycosidase</keyword>
<keyword id="KW-0378">Hydrolase</keyword>
<keyword id="KW-0624">Polysaccharide degradation</keyword>
<keyword id="KW-1185">Reference proteome</keyword>
<keyword id="KW-0964">Secreted</keyword>
<keyword id="KW-0732">Signal</keyword>
<accession>Q6K7G9</accession>
<accession>A0A0P0VQD5</accession>
<accession>Q0DX27</accession>
<dbReference type="EC" id="3.2.1.4"/>
<dbReference type="EMBL" id="AP004846">
    <property type="protein sequence ID" value="BAD19513.1"/>
    <property type="molecule type" value="Genomic_DNA"/>
</dbReference>
<dbReference type="EMBL" id="AP008208">
    <property type="protein sequence ID" value="BAF10211.1"/>
    <property type="molecule type" value="Genomic_DNA"/>
</dbReference>
<dbReference type="EMBL" id="AP014958">
    <property type="protein sequence ID" value="BAS81192.1"/>
    <property type="molecule type" value="Genomic_DNA"/>
</dbReference>
<dbReference type="EMBL" id="CM000139">
    <property type="protein sequence ID" value="EAZ24816.1"/>
    <property type="molecule type" value="Genomic_DNA"/>
</dbReference>
<dbReference type="EMBL" id="AK100190">
    <property type="protein sequence ID" value="BAG94487.1"/>
    <property type="molecule type" value="mRNA"/>
</dbReference>
<dbReference type="EMBL" id="AK106971">
    <property type="protein sequence ID" value="BAG97900.1"/>
    <property type="molecule type" value="mRNA"/>
</dbReference>
<dbReference type="RefSeq" id="XP_015624767.1">
    <property type="nucleotide sequence ID" value="XM_015769281.1"/>
</dbReference>
<dbReference type="SMR" id="Q6K7G9"/>
<dbReference type="FunCoup" id="Q6K7G9">
    <property type="interactions" value="215"/>
</dbReference>
<dbReference type="STRING" id="39947.Q6K7G9"/>
<dbReference type="CAZy" id="GH9">
    <property type="family name" value="Glycoside Hydrolase Family 9"/>
</dbReference>
<dbReference type="PaxDb" id="39947-Q6K7G9"/>
<dbReference type="EnsemblPlants" id="Os02t0778600-01">
    <property type="protein sequence ID" value="Os02t0778600-01"/>
    <property type="gene ID" value="Os02g0778600"/>
</dbReference>
<dbReference type="Gramene" id="Os02t0778600-01">
    <property type="protein sequence ID" value="Os02t0778600-01"/>
    <property type="gene ID" value="Os02g0778600"/>
</dbReference>
<dbReference type="KEGG" id="dosa:Os02g0778600"/>
<dbReference type="eggNOG" id="ENOG502QQ06">
    <property type="taxonomic scope" value="Eukaryota"/>
</dbReference>
<dbReference type="HOGENOM" id="CLU_008926_1_2_1"/>
<dbReference type="InParanoid" id="Q6K7G9"/>
<dbReference type="OMA" id="PSWRGDS"/>
<dbReference type="OrthoDB" id="10257085at2759"/>
<dbReference type="Proteomes" id="UP000000763">
    <property type="component" value="Chromosome 2"/>
</dbReference>
<dbReference type="Proteomes" id="UP000007752">
    <property type="component" value="Chromosome 2"/>
</dbReference>
<dbReference type="Proteomes" id="UP000059680">
    <property type="component" value="Chromosome 2"/>
</dbReference>
<dbReference type="GO" id="GO:0005576">
    <property type="term" value="C:extracellular region"/>
    <property type="evidence" value="ECO:0007669"/>
    <property type="project" value="UniProtKB-SubCell"/>
</dbReference>
<dbReference type="GO" id="GO:0008810">
    <property type="term" value="F:cellulase activity"/>
    <property type="evidence" value="ECO:0007669"/>
    <property type="project" value="UniProtKB-EC"/>
</dbReference>
<dbReference type="GO" id="GO:0071555">
    <property type="term" value="P:cell wall organization"/>
    <property type="evidence" value="ECO:0007669"/>
    <property type="project" value="UniProtKB-KW"/>
</dbReference>
<dbReference type="GO" id="GO:0030245">
    <property type="term" value="P:cellulose catabolic process"/>
    <property type="evidence" value="ECO:0007669"/>
    <property type="project" value="UniProtKB-KW"/>
</dbReference>
<dbReference type="FunFam" id="1.50.10.10:FF:000020">
    <property type="entry name" value="Endoglucanase"/>
    <property type="match status" value="1"/>
</dbReference>
<dbReference type="Gene3D" id="1.50.10.10">
    <property type="match status" value="1"/>
</dbReference>
<dbReference type="InterPro" id="IPR008928">
    <property type="entry name" value="6-hairpin_glycosidase_sf"/>
</dbReference>
<dbReference type="InterPro" id="IPR012341">
    <property type="entry name" value="6hp_glycosidase-like_sf"/>
</dbReference>
<dbReference type="InterPro" id="IPR001701">
    <property type="entry name" value="Glyco_hydro_9"/>
</dbReference>
<dbReference type="InterPro" id="IPR018221">
    <property type="entry name" value="Glyco_hydro_9_His_AS"/>
</dbReference>
<dbReference type="PANTHER" id="PTHR22298">
    <property type="entry name" value="ENDO-1,4-BETA-GLUCANASE"/>
    <property type="match status" value="1"/>
</dbReference>
<dbReference type="Pfam" id="PF00759">
    <property type="entry name" value="Glyco_hydro_9"/>
    <property type="match status" value="1"/>
</dbReference>
<dbReference type="SUPFAM" id="SSF48208">
    <property type="entry name" value="Six-hairpin glycosidases"/>
    <property type="match status" value="1"/>
</dbReference>
<dbReference type="PROSITE" id="PS60032">
    <property type="entry name" value="GH9_1"/>
    <property type="match status" value="1"/>
</dbReference>
<dbReference type="PROSITE" id="PS00592">
    <property type="entry name" value="GH9_2"/>
    <property type="match status" value="1"/>
</dbReference>
<comment type="catalytic activity">
    <reaction>
        <text>Endohydrolysis of (1-&gt;4)-beta-D-glucosidic linkages in cellulose, lichenin and cereal beta-D-glucans.</text>
        <dbReference type="EC" id="3.2.1.4"/>
    </reaction>
</comment>
<comment type="subcellular location">
    <subcellularLocation>
        <location evidence="1">Secreted</location>
    </subcellularLocation>
</comment>
<comment type="similarity">
    <text evidence="4 5">Belongs to the glycosyl hydrolase 9 (cellulase E) family.</text>
</comment>
<proteinExistence type="evidence at transcript level"/>
<protein>
    <recommendedName>
        <fullName>Endoglucanase 8</fullName>
        <ecNumber>3.2.1.4</ecNumber>
    </recommendedName>
    <alternativeName>
        <fullName>Endo-1,4-beta glucanase 8</fullName>
    </alternativeName>
</protein>
<organism>
    <name type="scientific">Oryza sativa subsp. japonica</name>
    <name type="common">Rice</name>
    <dbReference type="NCBI Taxonomy" id="39947"/>
    <lineage>
        <taxon>Eukaryota</taxon>
        <taxon>Viridiplantae</taxon>
        <taxon>Streptophyta</taxon>
        <taxon>Embryophyta</taxon>
        <taxon>Tracheophyta</taxon>
        <taxon>Spermatophyta</taxon>
        <taxon>Magnoliopsida</taxon>
        <taxon>Liliopsida</taxon>
        <taxon>Poales</taxon>
        <taxon>Poaceae</taxon>
        <taxon>BOP clade</taxon>
        <taxon>Oryzoideae</taxon>
        <taxon>Oryzeae</taxon>
        <taxon>Oryzinae</taxon>
        <taxon>Oryza</taxon>
        <taxon>Oryza sativa</taxon>
    </lineage>
</organism>
<evidence type="ECO:0000250" key="1"/>
<evidence type="ECO:0000255" key="2"/>
<evidence type="ECO:0000255" key="3">
    <source>
        <dbReference type="PROSITE-ProRule" id="PRU10059"/>
    </source>
</evidence>
<evidence type="ECO:0000255" key="4">
    <source>
        <dbReference type="PROSITE-ProRule" id="PRU10140"/>
    </source>
</evidence>
<evidence type="ECO:0000305" key="5"/>
<sequence length="501" mass="54541">MKPRSSRDGHNAAAAAALLLAALVLSGDVLPAVVAGGAPSFNYKDALTKSIMFLEAQRSGKLPPTNRIKWRGDSGMEDGKLANVDLTGGYYDAGDNVKYGLPLAFTVTTLAWTAMAFEKELKAARELENVHAAIRWGTDYFLKAATKKDHLWVQVGDPNADHQCWVRPENMPTPRTLYQINDKTPGSEIAAETAAAMTASSMVFRKDKPYSRRLLNKAKLLFQFAKTHQGTYDGECPFYCSYSGYNDELLWAATWLYLATKRQVYADFIGHEAISSSVAEFSWDLKFPGAQVLLAELNMTSSGGLQSFKSQADNFVCAVLPDTPFHQVSITPGGMIHLRDGANSQYVTSTAFLFVAYSDILRRINQPVMCGAQAVQPARLLQFAKQQIDYLLGANPRGRSYVVGFGVNPPTQPHHRGASTPVLPPGYQVNCGMSFSEWFTPDRPNPNELTGAIMGGPDGGDNFSDKRGNSSCTEPCTYINSLSIGPLAALAIRGPNLIATQ</sequence>
<reference key="1">
    <citation type="journal article" date="2005" name="Nature">
        <title>The map-based sequence of the rice genome.</title>
        <authorList>
            <consortium name="International rice genome sequencing project (IRGSP)"/>
        </authorList>
    </citation>
    <scope>NUCLEOTIDE SEQUENCE [LARGE SCALE GENOMIC DNA]</scope>
    <source>
        <strain>cv. Nipponbare</strain>
    </source>
</reference>
<reference key="2">
    <citation type="journal article" date="2008" name="Nucleic Acids Res.">
        <title>The rice annotation project database (RAP-DB): 2008 update.</title>
        <authorList>
            <consortium name="The rice annotation project (RAP)"/>
        </authorList>
    </citation>
    <scope>GENOME REANNOTATION</scope>
    <source>
        <strain>cv. Nipponbare</strain>
    </source>
</reference>
<reference key="3">
    <citation type="journal article" date="2013" name="Rice">
        <title>Improvement of the Oryza sativa Nipponbare reference genome using next generation sequence and optical map data.</title>
        <authorList>
            <person name="Kawahara Y."/>
            <person name="de la Bastide M."/>
            <person name="Hamilton J.P."/>
            <person name="Kanamori H."/>
            <person name="McCombie W.R."/>
            <person name="Ouyang S."/>
            <person name="Schwartz D.C."/>
            <person name="Tanaka T."/>
            <person name="Wu J."/>
            <person name="Zhou S."/>
            <person name="Childs K.L."/>
            <person name="Davidson R.M."/>
            <person name="Lin H."/>
            <person name="Quesada-Ocampo L."/>
            <person name="Vaillancourt B."/>
            <person name="Sakai H."/>
            <person name="Lee S.S."/>
            <person name="Kim J."/>
            <person name="Numa H."/>
            <person name="Itoh T."/>
            <person name="Buell C.R."/>
            <person name="Matsumoto T."/>
        </authorList>
    </citation>
    <scope>GENOME REANNOTATION</scope>
    <source>
        <strain>cv. Nipponbare</strain>
    </source>
</reference>
<reference key="4">
    <citation type="journal article" date="2005" name="PLoS Biol.">
        <title>The genomes of Oryza sativa: a history of duplications.</title>
        <authorList>
            <person name="Yu J."/>
            <person name="Wang J."/>
            <person name="Lin W."/>
            <person name="Li S."/>
            <person name="Li H."/>
            <person name="Zhou J."/>
            <person name="Ni P."/>
            <person name="Dong W."/>
            <person name="Hu S."/>
            <person name="Zeng C."/>
            <person name="Zhang J."/>
            <person name="Zhang Y."/>
            <person name="Li R."/>
            <person name="Xu Z."/>
            <person name="Li S."/>
            <person name="Li X."/>
            <person name="Zheng H."/>
            <person name="Cong L."/>
            <person name="Lin L."/>
            <person name="Yin J."/>
            <person name="Geng J."/>
            <person name="Li G."/>
            <person name="Shi J."/>
            <person name="Liu J."/>
            <person name="Lv H."/>
            <person name="Li J."/>
            <person name="Wang J."/>
            <person name="Deng Y."/>
            <person name="Ran L."/>
            <person name="Shi X."/>
            <person name="Wang X."/>
            <person name="Wu Q."/>
            <person name="Li C."/>
            <person name="Ren X."/>
            <person name="Wang J."/>
            <person name="Wang X."/>
            <person name="Li D."/>
            <person name="Liu D."/>
            <person name="Zhang X."/>
            <person name="Ji Z."/>
            <person name="Zhao W."/>
            <person name="Sun Y."/>
            <person name="Zhang Z."/>
            <person name="Bao J."/>
            <person name="Han Y."/>
            <person name="Dong L."/>
            <person name="Ji J."/>
            <person name="Chen P."/>
            <person name="Wu S."/>
            <person name="Liu J."/>
            <person name="Xiao Y."/>
            <person name="Bu D."/>
            <person name="Tan J."/>
            <person name="Yang L."/>
            <person name="Ye C."/>
            <person name="Zhang J."/>
            <person name="Xu J."/>
            <person name="Zhou Y."/>
            <person name="Yu Y."/>
            <person name="Zhang B."/>
            <person name="Zhuang S."/>
            <person name="Wei H."/>
            <person name="Liu B."/>
            <person name="Lei M."/>
            <person name="Yu H."/>
            <person name="Li Y."/>
            <person name="Xu H."/>
            <person name="Wei S."/>
            <person name="He X."/>
            <person name="Fang L."/>
            <person name="Zhang Z."/>
            <person name="Zhang Y."/>
            <person name="Huang X."/>
            <person name="Su Z."/>
            <person name="Tong W."/>
            <person name="Li J."/>
            <person name="Tong Z."/>
            <person name="Li S."/>
            <person name="Ye J."/>
            <person name="Wang L."/>
            <person name="Fang L."/>
            <person name="Lei T."/>
            <person name="Chen C.-S."/>
            <person name="Chen H.-C."/>
            <person name="Xu Z."/>
            <person name="Li H."/>
            <person name="Huang H."/>
            <person name="Zhang F."/>
            <person name="Xu H."/>
            <person name="Li N."/>
            <person name="Zhao C."/>
            <person name="Li S."/>
            <person name="Dong L."/>
            <person name="Huang Y."/>
            <person name="Li L."/>
            <person name="Xi Y."/>
            <person name="Qi Q."/>
            <person name="Li W."/>
            <person name="Zhang B."/>
            <person name="Hu W."/>
            <person name="Zhang Y."/>
            <person name="Tian X."/>
            <person name="Jiao Y."/>
            <person name="Liang X."/>
            <person name="Jin J."/>
            <person name="Gao L."/>
            <person name="Zheng W."/>
            <person name="Hao B."/>
            <person name="Liu S.-M."/>
            <person name="Wang W."/>
            <person name="Yuan L."/>
            <person name="Cao M."/>
            <person name="McDermott J."/>
            <person name="Samudrala R."/>
            <person name="Wang J."/>
            <person name="Wong G.K.-S."/>
            <person name="Yang H."/>
        </authorList>
    </citation>
    <scope>NUCLEOTIDE SEQUENCE [LARGE SCALE GENOMIC DNA]</scope>
    <source>
        <strain>cv. Nipponbare</strain>
    </source>
</reference>
<reference key="5">
    <citation type="journal article" date="2003" name="Science">
        <title>Collection, mapping, and annotation of over 28,000 cDNA clones from japonica rice.</title>
        <authorList>
            <consortium name="The rice full-length cDNA consortium"/>
        </authorList>
    </citation>
    <scope>NUCLEOTIDE SEQUENCE [LARGE SCALE MRNA]</scope>
    <source>
        <strain>cv. Nipponbare</strain>
    </source>
</reference>
<gene>
    <name type="ordered locus">Os02g0778600</name>
    <name type="ordered locus">LOC_Os02g53820</name>
    <name type="ORF">OJ1293_A01.6</name>
    <name type="ORF">OsJ_008299</name>
</gene>
<feature type="signal peptide" evidence="2">
    <location>
        <begin position="1"/>
        <end position="35"/>
    </location>
</feature>
<feature type="chain" id="PRO_0000249285" description="Endoglucanase 8">
    <location>
        <begin position="36"/>
        <end position="501"/>
    </location>
</feature>
<feature type="active site" description="Nucleophile" evidence="4">
    <location>
        <position position="95"/>
    </location>
</feature>
<feature type="active site" evidence="3">
    <location>
        <position position="414"/>
    </location>
</feature>
<feature type="active site" evidence="3">
    <location>
        <position position="465"/>
    </location>
</feature>
<feature type="active site" evidence="3">
    <location>
        <position position="474"/>
    </location>
</feature>
<feature type="glycosylation site" description="N-linked (GlcNAc...) asparagine" evidence="2">
    <location>
        <position position="298"/>
    </location>
</feature>
<feature type="glycosylation site" description="N-linked (GlcNAc...) asparagine" evidence="2">
    <location>
        <position position="462"/>
    </location>
</feature>
<feature type="glycosylation site" description="N-linked (GlcNAc...) asparagine" evidence="2">
    <location>
        <position position="469"/>
    </location>
</feature>
<name>GUN8_ORYSJ</name>